<comment type="function">
    <text evidence="1">IGPS catalyzes the conversion of PRFAR and glutamine to IGP, AICAR and glutamate. The HisF subunit catalyzes the cyclization activity that produces IGP and AICAR from PRFAR using the ammonia provided by the HisH subunit.</text>
</comment>
<comment type="catalytic activity">
    <reaction evidence="1">
        <text>5-[(5-phospho-1-deoxy-D-ribulos-1-ylimino)methylamino]-1-(5-phospho-beta-D-ribosyl)imidazole-4-carboxamide + L-glutamine = D-erythro-1-(imidazol-4-yl)glycerol 3-phosphate + 5-amino-1-(5-phospho-beta-D-ribosyl)imidazole-4-carboxamide + L-glutamate + H(+)</text>
        <dbReference type="Rhea" id="RHEA:24793"/>
        <dbReference type="ChEBI" id="CHEBI:15378"/>
        <dbReference type="ChEBI" id="CHEBI:29985"/>
        <dbReference type="ChEBI" id="CHEBI:58278"/>
        <dbReference type="ChEBI" id="CHEBI:58359"/>
        <dbReference type="ChEBI" id="CHEBI:58475"/>
        <dbReference type="ChEBI" id="CHEBI:58525"/>
        <dbReference type="EC" id="4.3.2.10"/>
    </reaction>
</comment>
<comment type="pathway">
    <text evidence="1">Amino-acid biosynthesis; L-histidine biosynthesis; L-histidine from 5-phospho-alpha-D-ribose 1-diphosphate: step 5/9.</text>
</comment>
<comment type="subunit">
    <text evidence="1">Heterodimer of HisH and HisF.</text>
</comment>
<comment type="subcellular location">
    <subcellularLocation>
        <location evidence="1">Cytoplasm</location>
    </subcellularLocation>
</comment>
<comment type="similarity">
    <text evidence="1">Belongs to the HisA/HisF family.</text>
</comment>
<organism>
    <name type="scientific">Chlorobium phaeobacteroides (strain DSM 266 / SMG 266 / 2430)</name>
    <dbReference type="NCBI Taxonomy" id="290317"/>
    <lineage>
        <taxon>Bacteria</taxon>
        <taxon>Pseudomonadati</taxon>
        <taxon>Chlorobiota</taxon>
        <taxon>Chlorobiia</taxon>
        <taxon>Chlorobiales</taxon>
        <taxon>Chlorobiaceae</taxon>
        <taxon>Chlorobium/Pelodictyon group</taxon>
        <taxon>Chlorobium</taxon>
    </lineage>
</organism>
<gene>
    <name evidence="1" type="primary">hisF</name>
    <name type="ordered locus">Cpha266_1907</name>
</gene>
<name>HIS6_CHLPD</name>
<dbReference type="EC" id="4.3.2.10" evidence="1"/>
<dbReference type="EMBL" id="CP000492">
    <property type="protein sequence ID" value="ABL65923.1"/>
    <property type="molecule type" value="Genomic_DNA"/>
</dbReference>
<dbReference type="RefSeq" id="WP_011745730.1">
    <property type="nucleotide sequence ID" value="NC_008639.1"/>
</dbReference>
<dbReference type="SMR" id="A1BHP6"/>
<dbReference type="STRING" id="290317.Cpha266_1907"/>
<dbReference type="KEGG" id="cph:Cpha266_1907"/>
<dbReference type="eggNOG" id="COG0107">
    <property type="taxonomic scope" value="Bacteria"/>
</dbReference>
<dbReference type="HOGENOM" id="CLU_048577_4_0_10"/>
<dbReference type="OrthoDB" id="9781903at2"/>
<dbReference type="UniPathway" id="UPA00031">
    <property type="reaction ID" value="UER00010"/>
</dbReference>
<dbReference type="Proteomes" id="UP000008701">
    <property type="component" value="Chromosome"/>
</dbReference>
<dbReference type="GO" id="GO:0005737">
    <property type="term" value="C:cytoplasm"/>
    <property type="evidence" value="ECO:0007669"/>
    <property type="project" value="UniProtKB-SubCell"/>
</dbReference>
<dbReference type="GO" id="GO:0000107">
    <property type="term" value="F:imidazoleglycerol-phosphate synthase activity"/>
    <property type="evidence" value="ECO:0007669"/>
    <property type="project" value="UniProtKB-UniRule"/>
</dbReference>
<dbReference type="GO" id="GO:0016829">
    <property type="term" value="F:lyase activity"/>
    <property type="evidence" value="ECO:0007669"/>
    <property type="project" value="UniProtKB-KW"/>
</dbReference>
<dbReference type="GO" id="GO:0000105">
    <property type="term" value="P:L-histidine biosynthetic process"/>
    <property type="evidence" value="ECO:0007669"/>
    <property type="project" value="UniProtKB-UniRule"/>
</dbReference>
<dbReference type="CDD" id="cd04731">
    <property type="entry name" value="HisF"/>
    <property type="match status" value="1"/>
</dbReference>
<dbReference type="FunFam" id="3.20.20.70:FF:000006">
    <property type="entry name" value="Imidazole glycerol phosphate synthase subunit HisF"/>
    <property type="match status" value="1"/>
</dbReference>
<dbReference type="Gene3D" id="3.20.20.70">
    <property type="entry name" value="Aldolase class I"/>
    <property type="match status" value="1"/>
</dbReference>
<dbReference type="HAMAP" id="MF_01013">
    <property type="entry name" value="HisF"/>
    <property type="match status" value="1"/>
</dbReference>
<dbReference type="InterPro" id="IPR013785">
    <property type="entry name" value="Aldolase_TIM"/>
</dbReference>
<dbReference type="InterPro" id="IPR006062">
    <property type="entry name" value="His_biosynth"/>
</dbReference>
<dbReference type="InterPro" id="IPR004651">
    <property type="entry name" value="HisF"/>
</dbReference>
<dbReference type="InterPro" id="IPR050064">
    <property type="entry name" value="IGPS_HisA/HisF"/>
</dbReference>
<dbReference type="InterPro" id="IPR011060">
    <property type="entry name" value="RibuloseP-bd_barrel"/>
</dbReference>
<dbReference type="NCBIfam" id="TIGR00735">
    <property type="entry name" value="hisF"/>
    <property type="match status" value="1"/>
</dbReference>
<dbReference type="PANTHER" id="PTHR21235:SF2">
    <property type="entry name" value="IMIDAZOLE GLYCEROL PHOSPHATE SYNTHASE HISHF"/>
    <property type="match status" value="1"/>
</dbReference>
<dbReference type="PANTHER" id="PTHR21235">
    <property type="entry name" value="IMIDAZOLE GLYCEROL PHOSPHATE SYNTHASE SUBUNIT HISF/H IGP SYNTHASE SUBUNIT HISF/H"/>
    <property type="match status" value="1"/>
</dbReference>
<dbReference type="Pfam" id="PF00977">
    <property type="entry name" value="His_biosynth"/>
    <property type="match status" value="1"/>
</dbReference>
<dbReference type="SUPFAM" id="SSF51366">
    <property type="entry name" value="Ribulose-phoshate binding barrel"/>
    <property type="match status" value="1"/>
</dbReference>
<proteinExistence type="inferred from homology"/>
<feature type="chain" id="PRO_1000063043" description="Imidazole glycerol phosphate synthase subunit HisF">
    <location>
        <begin position="1"/>
        <end position="251"/>
    </location>
</feature>
<feature type="active site" evidence="1">
    <location>
        <position position="11"/>
    </location>
</feature>
<feature type="active site" evidence="1">
    <location>
        <position position="130"/>
    </location>
</feature>
<reference key="1">
    <citation type="submission" date="2006-12" db="EMBL/GenBank/DDBJ databases">
        <title>Complete sequence of Chlorobium phaeobacteroides DSM 266.</title>
        <authorList>
            <consortium name="US DOE Joint Genome Institute"/>
            <person name="Copeland A."/>
            <person name="Lucas S."/>
            <person name="Lapidus A."/>
            <person name="Barry K."/>
            <person name="Detter J.C."/>
            <person name="Glavina del Rio T."/>
            <person name="Hammon N."/>
            <person name="Israni S."/>
            <person name="Pitluck S."/>
            <person name="Goltsman E."/>
            <person name="Schmutz J."/>
            <person name="Larimer F."/>
            <person name="Land M."/>
            <person name="Hauser L."/>
            <person name="Mikhailova N."/>
            <person name="Li T."/>
            <person name="Overmann J."/>
            <person name="Bryant D.A."/>
            <person name="Richardson P."/>
        </authorList>
    </citation>
    <scope>NUCLEOTIDE SEQUENCE [LARGE SCALE GENOMIC DNA]</scope>
    <source>
        <strain>DSM 266 / SMG 266 / 2430</strain>
    </source>
</reference>
<accession>A1BHP6</accession>
<protein>
    <recommendedName>
        <fullName evidence="1">Imidazole glycerol phosphate synthase subunit HisF</fullName>
        <ecNumber evidence="1">4.3.2.10</ecNumber>
    </recommendedName>
    <alternativeName>
        <fullName evidence="1">IGP synthase cyclase subunit</fullName>
    </alternativeName>
    <alternativeName>
        <fullName evidence="1">IGP synthase subunit HisF</fullName>
    </alternativeName>
    <alternativeName>
        <fullName evidence="1">ImGP synthase subunit HisF</fullName>
        <shortName evidence="1">IGPS subunit HisF</shortName>
    </alternativeName>
</protein>
<keyword id="KW-0028">Amino-acid biosynthesis</keyword>
<keyword id="KW-0963">Cytoplasm</keyword>
<keyword id="KW-0368">Histidine biosynthesis</keyword>
<keyword id="KW-0456">Lyase</keyword>
<keyword id="KW-1185">Reference proteome</keyword>
<evidence type="ECO:0000255" key="1">
    <source>
        <dbReference type="HAMAP-Rule" id="MF_01013"/>
    </source>
</evidence>
<sequence>MLAKRIIPCLDVTGGRVVKGINFEGLRDAGSILEQARFYNNELADELVFLDISASLESRKTTLEEVMKVSGEVFIPLTVGGGINSVERAKDVFLHGADKVSVNTAAVNHPELISRIAEKYGSQAVVVAIDIKKIGSDHMVHTHSGKNPTAYEALEWAHKVQELGAGEILLTSMDRDGTREGYDNDILARVSTSVHIPVIASGGAGNLEHLYEGFTIGHADAALAASIFHFRQYSIRQAKQYLRDRGIEVRL</sequence>